<protein>
    <recommendedName>
        <fullName>Thymidine kinase</fullName>
        <shortName>TDK</shortName>
        <ecNumber>2.7.1.21</ecNumber>
    </recommendedName>
</protein>
<accession>P0C8I4</accession>
<proteinExistence type="inferred from homology"/>
<sequence>MNIIRKLKPGTISLVLGPMFAGKTTFLIHCIYMLERLEKKVVFIKSTKNTRDKTIKTHSGIQLQSKQCEIIESTQLSDVGSLTDIHAVVIDEAHFFDDLIKCRAWADEEKIIILAGLNASFEQKMFQPIVHIFPYCSWIKYIGRTCMKCNRHNACFNVRKNADKTLILAGGSELYVTCCNNCLKKQMY</sequence>
<evidence type="ECO:0000250" key="1"/>
<evidence type="ECO:0000255" key="2"/>
<evidence type="ECO:0000269" key="3">
    <source>
    </source>
</evidence>
<evidence type="ECO:0000305" key="4"/>
<keyword id="KW-0067">ATP-binding</keyword>
<keyword id="KW-0237">DNA synthesis</keyword>
<keyword id="KW-0418">Kinase</keyword>
<keyword id="KW-0479">Metal-binding</keyword>
<keyword id="KW-0547">Nucleotide-binding</keyword>
<keyword id="KW-0808">Transferase</keyword>
<keyword id="KW-0843">Virulence</keyword>
<keyword id="KW-0862">Zinc</keyword>
<comment type="function">
    <text evidence="3">Phosphorylates thymidine. ASFV replicates in the cytoplasm of infected cells and contains genes encoding a number of enzymes needed for DNA synthesis, including thymidine kinase. Important for growth in swine macrophages in vitro and is a virus virulence factor in swine.</text>
</comment>
<comment type="catalytic activity">
    <reaction>
        <text>thymidine + ATP = dTMP + ADP + H(+)</text>
        <dbReference type="Rhea" id="RHEA:19129"/>
        <dbReference type="ChEBI" id="CHEBI:15378"/>
        <dbReference type="ChEBI" id="CHEBI:17748"/>
        <dbReference type="ChEBI" id="CHEBI:30616"/>
        <dbReference type="ChEBI" id="CHEBI:63528"/>
        <dbReference type="ChEBI" id="CHEBI:456216"/>
        <dbReference type="EC" id="2.7.1.21"/>
    </reaction>
</comment>
<comment type="similarity">
    <text evidence="4">Belongs to the thymidine kinase family.</text>
</comment>
<gene>
    <name type="ordered locus">Mal-058</name>
</gene>
<name>KITH_ASFM2</name>
<organismHost>
    <name type="scientific">Ornithodoros</name>
    <name type="common">relapsing fever ticks</name>
    <dbReference type="NCBI Taxonomy" id="6937"/>
</organismHost>
<organismHost>
    <name type="scientific">Phacochoerus aethiopicus</name>
    <name type="common">Warthog</name>
    <dbReference type="NCBI Taxonomy" id="85517"/>
</organismHost>
<organismHost>
    <name type="scientific">Phacochoerus africanus</name>
    <name type="common">Warthog</name>
    <dbReference type="NCBI Taxonomy" id="41426"/>
</organismHost>
<organismHost>
    <name type="scientific">Potamochoerus larvatus</name>
    <name type="common">Bushpig</name>
    <dbReference type="NCBI Taxonomy" id="273792"/>
</organismHost>
<organismHost>
    <name type="scientific">Sus scrofa</name>
    <name type="common">Pig</name>
    <dbReference type="NCBI Taxonomy" id="9823"/>
</organismHost>
<reference key="1">
    <citation type="submission" date="2003-03" db="EMBL/GenBank/DDBJ databases">
        <title>African swine fever virus genomes.</title>
        <authorList>
            <person name="Kutish G.F."/>
            <person name="Rock D.L."/>
        </authorList>
    </citation>
    <scope>NUCLEOTIDE SEQUENCE [LARGE SCALE GENOMIC DNA]</scope>
</reference>
<reference key="2">
    <citation type="journal article" date="1998" name="J. Virol.">
        <title>The African swine fever virus thymidine kinase gene is required for efficient replication in swine macrophages and for virulence in swine.</title>
        <authorList>
            <person name="Moore D.M."/>
            <person name="Zsak L."/>
            <person name="Neilan J.G."/>
            <person name="Lu Z."/>
            <person name="Rock D.L."/>
        </authorList>
    </citation>
    <scope>FUNCTION</scope>
</reference>
<organism>
    <name type="scientific">African swine fever virus (isolate Tick/Malawi/Lil 20-1/1983)</name>
    <name type="common">ASFV</name>
    <dbReference type="NCBI Taxonomy" id="10500"/>
    <lineage>
        <taxon>Viruses</taxon>
        <taxon>Varidnaviria</taxon>
        <taxon>Bamfordvirae</taxon>
        <taxon>Nucleocytoviricota</taxon>
        <taxon>Pokkesviricetes</taxon>
        <taxon>Asfuvirales</taxon>
        <taxon>Asfarviridae</taxon>
        <taxon>Asfivirus</taxon>
        <taxon>African swine fever virus</taxon>
    </lineage>
</organism>
<dbReference type="EC" id="2.7.1.21"/>
<dbReference type="EMBL" id="AY261361">
    <property type="status" value="NOT_ANNOTATED_CDS"/>
    <property type="molecule type" value="Genomic_DNA"/>
</dbReference>
<dbReference type="SMR" id="P0C8I4"/>
<dbReference type="Proteomes" id="UP000000860">
    <property type="component" value="Segment"/>
</dbReference>
<dbReference type="GO" id="GO:0005524">
    <property type="term" value="F:ATP binding"/>
    <property type="evidence" value="ECO:0007669"/>
    <property type="project" value="UniProtKB-KW"/>
</dbReference>
<dbReference type="GO" id="GO:0046872">
    <property type="term" value="F:metal ion binding"/>
    <property type="evidence" value="ECO:0007669"/>
    <property type="project" value="UniProtKB-KW"/>
</dbReference>
<dbReference type="GO" id="GO:0004797">
    <property type="term" value="F:thymidine kinase activity"/>
    <property type="evidence" value="ECO:0007669"/>
    <property type="project" value="UniProtKB-EC"/>
</dbReference>
<dbReference type="GO" id="GO:0071897">
    <property type="term" value="P:DNA biosynthetic process"/>
    <property type="evidence" value="ECO:0007669"/>
    <property type="project" value="UniProtKB-KW"/>
</dbReference>
<dbReference type="GO" id="GO:0046104">
    <property type="term" value="P:thymidine metabolic process"/>
    <property type="evidence" value="ECO:0007669"/>
    <property type="project" value="TreeGrafter"/>
</dbReference>
<dbReference type="Gene3D" id="3.30.60.20">
    <property type="match status" value="1"/>
</dbReference>
<dbReference type="Gene3D" id="3.40.50.300">
    <property type="entry name" value="P-loop containing nucleotide triphosphate hydrolases"/>
    <property type="match status" value="1"/>
</dbReference>
<dbReference type="InterPro" id="IPR027417">
    <property type="entry name" value="P-loop_NTPase"/>
</dbReference>
<dbReference type="InterPro" id="IPR001267">
    <property type="entry name" value="Thymidine_kinase"/>
</dbReference>
<dbReference type="InterPro" id="IPR020633">
    <property type="entry name" value="Thymidine_kinase_CS"/>
</dbReference>
<dbReference type="PANTHER" id="PTHR11441">
    <property type="entry name" value="THYMIDINE KINASE"/>
    <property type="match status" value="1"/>
</dbReference>
<dbReference type="PANTHER" id="PTHR11441:SF0">
    <property type="entry name" value="THYMIDINE KINASE, CYTOSOLIC"/>
    <property type="match status" value="1"/>
</dbReference>
<dbReference type="Pfam" id="PF00265">
    <property type="entry name" value="TK"/>
    <property type="match status" value="1"/>
</dbReference>
<dbReference type="PIRSF" id="PIRSF035805">
    <property type="entry name" value="TK_cell"/>
    <property type="match status" value="1"/>
</dbReference>
<dbReference type="SUPFAM" id="SSF52540">
    <property type="entry name" value="P-loop containing nucleoside triphosphate hydrolases"/>
    <property type="match status" value="1"/>
</dbReference>
<dbReference type="PROSITE" id="PS00603">
    <property type="entry name" value="TK_CELLULAR_TYPE"/>
    <property type="match status" value="1"/>
</dbReference>
<feature type="chain" id="PRO_0000355223" description="Thymidine kinase">
    <location>
        <begin position="1"/>
        <end position="188"/>
    </location>
</feature>
<feature type="active site" description="Proton acceptor" evidence="2">
    <location>
        <position position="92"/>
    </location>
</feature>
<feature type="binding site" evidence="1">
    <location>
        <begin position="17"/>
        <end position="24"/>
    </location>
    <ligand>
        <name>ATP</name>
        <dbReference type="ChEBI" id="CHEBI:30616"/>
    </ligand>
</feature>
<feature type="binding site" evidence="1">
    <location>
        <position position="121"/>
    </location>
    <ligand>
        <name>substrate</name>
    </ligand>
</feature>
<feature type="binding site" evidence="1">
    <location>
        <position position="146"/>
    </location>
    <ligand>
        <name>Zn(2+)</name>
        <dbReference type="ChEBI" id="CHEBI:29105"/>
    </ligand>
</feature>
<feature type="binding site" evidence="1">
    <location>
        <position position="149"/>
    </location>
    <ligand>
        <name>Zn(2+)</name>
        <dbReference type="ChEBI" id="CHEBI:29105"/>
    </ligand>
</feature>
<feature type="binding site" evidence="1">
    <location>
        <begin position="166"/>
        <end position="170"/>
    </location>
    <ligand>
        <name>substrate</name>
    </ligand>
</feature>
<feature type="binding site" evidence="1">
    <location>
        <position position="179"/>
    </location>
    <ligand>
        <name>Zn(2+)</name>
        <dbReference type="ChEBI" id="CHEBI:29105"/>
    </ligand>
</feature>
<feature type="binding site" evidence="1">
    <location>
        <position position="182"/>
    </location>
    <ligand>
        <name>Zn(2+)</name>
        <dbReference type="ChEBI" id="CHEBI:29105"/>
    </ligand>
</feature>